<protein>
    <recommendedName>
        <fullName evidence="3">Nucleoporin SEH1</fullName>
    </recommendedName>
    <alternativeName>
        <fullName evidence="3">GATOR2 complex protein SEH1</fullName>
    </alternativeName>
    <alternativeName>
        <fullName>Nup107-160 subcomplex subunit SEH1</fullName>
    </alternativeName>
</protein>
<evidence type="ECO:0000250" key="1">
    <source>
        <dbReference type="UniProtKB" id="Q96EE3"/>
    </source>
</evidence>
<evidence type="ECO:0000256" key="2">
    <source>
        <dbReference type="SAM" id="MobiDB-lite"/>
    </source>
</evidence>
<evidence type="ECO:0000305" key="3"/>
<keyword id="KW-0131">Cell cycle</keyword>
<keyword id="KW-0132">Cell division</keyword>
<keyword id="KW-0137">Centromere</keyword>
<keyword id="KW-0158">Chromosome</keyword>
<keyword id="KW-0159">Chromosome partition</keyword>
<keyword id="KW-1017">Isopeptide bond</keyword>
<keyword id="KW-0995">Kinetochore</keyword>
<keyword id="KW-0458">Lysosome</keyword>
<keyword id="KW-0472">Membrane</keyword>
<keyword id="KW-0498">Mitosis</keyword>
<keyword id="KW-0509">mRNA transport</keyword>
<keyword id="KW-0906">Nuclear pore complex</keyword>
<keyword id="KW-0539">Nucleus</keyword>
<keyword id="KW-0597">Phosphoprotein</keyword>
<keyword id="KW-0653">Protein transport</keyword>
<keyword id="KW-1185">Reference proteome</keyword>
<keyword id="KW-0677">Repeat</keyword>
<keyword id="KW-0811">Translocation</keyword>
<keyword id="KW-0813">Transport</keyword>
<keyword id="KW-0832">Ubl conjugation</keyword>
<keyword id="KW-0853">WD repeat</keyword>
<gene>
    <name type="primary">SEH1L</name>
</gene>
<comment type="function">
    <text evidence="1">Component of the Nup107-160 subcomplex of the nuclear pore complex (NPC). The Nup107-160 subcomplex is required for the assembly of a functional NPC. The Nup107-160 subcomplex is also required for normal kinetochore microtubule attachment, mitotic progression and chromosome segregation. This subunit plays a role in recruitment of the Nup107-160 subcomplex to the kinetochore.</text>
</comment>
<comment type="function">
    <text evidence="1">As a component of the GATOR2 complex, functions as an activator of the amino acid-sensing branch of the mTORC1 signaling pathway. The GATOR2 complex indirectly activates mTORC1 through the inhibition of the GATOR1 subcomplex. GATOR2 probably acts as an E3 ubiquitin-protein ligase toward GATOR1. In the presence of abundant amino acids, the GATOR2 complex mediates ubiquitination of the NPRL2 core component of the GATOR1 complex, leading to GATOR1 inactivation. In the absence of amino acids, GATOR2 is inhibited, activating the GATOR1 complex. Within the GATOR2 complex, SEC13 and SEH1L are required to stabilize the complex.</text>
</comment>
<comment type="activity regulation">
    <text evidence="1">The GATOR2 complex is negatively regulated by the upstream amino acid sensors CASTOR1 and SESN2, which sequester the GATOR2 complex in absence of amino acids. In the presence of abundant amino acids, GATOR2 is released from CASTOR1 and SESN2 and activated.</text>
</comment>
<comment type="subunit">
    <text evidence="1">Component of the Nup107-160 subcomplex of the nuclear pore complex (NPC). The Nup107-160 subcomplex includes NUP160, NUP133, NUP107, NUP98, NUP85, NUP43, NUP37, SEH1 and SEC13. The SEH1 subunit appears to be only weakly associated with the Nup107-160 subcomplex. Component of the GATOR2 subcomplex, composed of MIOS, SEC13, SEH1L, WDR24 and WDR59. The GATOR2 complex interacts with CASTOR1 and CASTOR2; the interaction is negatively regulated by arginine. The GATOR2 complex interacts with SESN1, SESN2 and SESN3; the interaction is negatively regulated by amino acids. SESN1, SESN2 and SESN3 convey leucine availability via direct interaction with SEH1L and WDR24.</text>
</comment>
<comment type="subcellular location">
    <subcellularLocation>
        <location evidence="1">Chromosome</location>
        <location evidence="1">Centromere</location>
        <location evidence="1">Kinetochore</location>
    </subcellularLocation>
    <subcellularLocation>
        <location evidence="1">Nucleus</location>
        <location evidence="1">Nuclear pore complex</location>
    </subcellularLocation>
    <subcellularLocation>
        <location evidence="1">Lysosome membrane</location>
    </subcellularLocation>
</comment>
<comment type="similarity">
    <text evidence="3">Belongs to the WD repeat SEC13 family.</text>
</comment>
<accession>Q5RAN6</accession>
<organism>
    <name type="scientific">Pongo abelii</name>
    <name type="common">Sumatran orangutan</name>
    <name type="synonym">Pongo pygmaeus abelii</name>
    <dbReference type="NCBI Taxonomy" id="9601"/>
    <lineage>
        <taxon>Eukaryota</taxon>
        <taxon>Metazoa</taxon>
        <taxon>Chordata</taxon>
        <taxon>Craniata</taxon>
        <taxon>Vertebrata</taxon>
        <taxon>Euteleostomi</taxon>
        <taxon>Mammalia</taxon>
        <taxon>Eutheria</taxon>
        <taxon>Euarchontoglires</taxon>
        <taxon>Primates</taxon>
        <taxon>Haplorrhini</taxon>
        <taxon>Catarrhini</taxon>
        <taxon>Hominidae</taxon>
        <taxon>Pongo</taxon>
    </lineage>
</organism>
<feature type="chain" id="PRO_0000373807" description="Nucleoporin SEH1">
    <location>
        <begin position="1"/>
        <end position="360"/>
    </location>
</feature>
<feature type="repeat" description="WD 1">
    <location>
        <begin position="10"/>
        <end position="49"/>
    </location>
</feature>
<feature type="repeat" description="WD 2">
    <location>
        <begin position="55"/>
        <end position="96"/>
    </location>
</feature>
<feature type="repeat" description="WD 3">
    <location>
        <begin position="111"/>
        <end position="152"/>
    </location>
</feature>
<feature type="repeat" description="WD 4">
    <location>
        <begin position="160"/>
        <end position="210"/>
    </location>
</feature>
<feature type="repeat" description="WD 5">
    <location>
        <begin position="217"/>
        <end position="258"/>
    </location>
</feature>
<feature type="repeat" description="WD 6">
    <location>
        <begin position="276"/>
        <end position="315"/>
    </location>
</feature>
<feature type="region of interest" description="Disordered" evidence="2">
    <location>
        <begin position="324"/>
        <end position="360"/>
    </location>
</feature>
<feature type="compositionally biased region" description="Polar residues" evidence="2">
    <location>
        <begin position="324"/>
        <end position="354"/>
    </location>
</feature>
<feature type="modified residue" description="Phosphoserine" evidence="1">
    <location>
        <position position="179"/>
    </location>
</feature>
<feature type="modified residue" description="Phosphoserine" evidence="1">
    <location>
        <position position="190"/>
    </location>
</feature>
<feature type="cross-link" description="Glycyl lysine isopeptide (Lys-Gly) (interchain with G-Cter in SUMO2)" evidence="1">
    <location>
        <position position="12"/>
    </location>
</feature>
<sequence>MFVARSIAADHKDLIHDVSFDFHGRRMATCSSDQSVKVWDKSESGDWHCTASWKTHSGSVWRVTWAHPEFGQVLASCSFDRTAAVWEEIVGESNDKLRGQSHWVKRTTLVDSRTSVTDVKFAPKHMGLMLATCSADGIVRIYEAPDVMNLSQWSLQHEISCKLSCSCISWNPSSSRAHSPMIAVGSDDSSPNAMAKVQIFEYNENTRKYAKAETLMTVTDPVHDIAFAPNLGRSFHILAIATKDVRIFTLKPVRKELTSSGGPTKFEIHIVAHFDNHNSQVWRVSWNITGTVLASSGDDGCVRLWKANYMDNWKCTGILKGNGSPVNGSSQQGTSNPSLGSNIPSLQNSLNGSSAGRKHS</sequence>
<proteinExistence type="evidence at transcript level"/>
<dbReference type="EMBL" id="CR858979">
    <property type="protein sequence ID" value="CAH91174.1"/>
    <property type="molecule type" value="mRNA"/>
</dbReference>
<dbReference type="RefSeq" id="NP_001125688.1">
    <property type="nucleotide sequence ID" value="NM_001132216.1"/>
</dbReference>
<dbReference type="SMR" id="Q5RAN6"/>
<dbReference type="FunCoup" id="Q5RAN6">
    <property type="interactions" value="3181"/>
</dbReference>
<dbReference type="STRING" id="9601.ENSPPYP00000010077"/>
<dbReference type="GeneID" id="100172610"/>
<dbReference type="KEGG" id="pon:100172610"/>
<dbReference type="CTD" id="81929"/>
<dbReference type="eggNOG" id="KOG2445">
    <property type="taxonomic scope" value="Eukaryota"/>
</dbReference>
<dbReference type="InParanoid" id="Q5RAN6"/>
<dbReference type="OrthoDB" id="364224at2759"/>
<dbReference type="Proteomes" id="UP000001595">
    <property type="component" value="Unplaced"/>
</dbReference>
<dbReference type="GO" id="GO:0061700">
    <property type="term" value="C:GATOR2 complex"/>
    <property type="evidence" value="ECO:0000250"/>
    <property type="project" value="UniProtKB"/>
</dbReference>
<dbReference type="GO" id="GO:0000776">
    <property type="term" value="C:kinetochore"/>
    <property type="evidence" value="ECO:0007669"/>
    <property type="project" value="UniProtKB-KW"/>
</dbReference>
<dbReference type="GO" id="GO:0005765">
    <property type="term" value="C:lysosomal membrane"/>
    <property type="evidence" value="ECO:0000250"/>
    <property type="project" value="UniProtKB"/>
</dbReference>
<dbReference type="GO" id="GO:0031080">
    <property type="term" value="C:nuclear pore outer ring"/>
    <property type="evidence" value="ECO:0000250"/>
    <property type="project" value="UniProtKB"/>
</dbReference>
<dbReference type="GO" id="GO:0005198">
    <property type="term" value="F:structural molecule activity"/>
    <property type="evidence" value="ECO:0007669"/>
    <property type="project" value="InterPro"/>
</dbReference>
<dbReference type="GO" id="GO:0051315">
    <property type="term" value="P:attachment of mitotic spindle microtubules to kinetochore"/>
    <property type="evidence" value="ECO:0000250"/>
    <property type="project" value="UniProtKB"/>
</dbReference>
<dbReference type="GO" id="GO:0051301">
    <property type="term" value="P:cell division"/>
    <property type="evidence" value="ECO:0007669"/>
    <property type="project" value="UniProtKB-KW"/>
</dbReference>
<dbReference type="GO" id="GO:0034198">
    <property type="term" value="P:cellular response to amino acid starvation"/>
    <property type="evidence" value="ECO:0007669"/>
    <property type="project" value="TreeGrafter"/>
</dbReference>
<dbReference type="GO" id="GO:0031669">
    <property type="term" value="P:cellular response to nutrient levels"/>
    <property type="evidence" value="ECO:0000250"/>
    <property type="project" value="UniProtKB"/>
</dbReference>
<dbReference type="GO" id="GO:0007080">
    <property type="term" value="P:mitotic metaphase chromosome alignment"/>
    <property type="evidence" value="ECO:0000250"/>
    <property type="project" value="UniProtKB"/>
</dbReference>
<dbReference type="GO" id="GO:0051028">
    <property type="term" value="P:mRNA transport"/>
    <property type="evidence" value="ECO:0007669"/>
    <property type="project" value="UniProtKB-KW"/>
</dbReference>
<dbReference type="GO" id="GO:0006999">
    <property type="term" value="P:nuclear pore organization"/>
    <property type="evidence" value="ECO:0000250"/>
    <property type="project" value="UniProtKB"/>
</dbReference>
<dbReference type="GO" id="GO:1904263">
    <property type="term" value="P:positive regulation of TORC1 signaling"/>
    <property type="evidence" value="ECO:0000250"/>
    <property type="project" value="UniProtKB"/>
</dbReference>
<dbReference type="GO" id="GO:0015031">
    <property type="term" value="P:protein transport"/>
    <property type="evidence" value="ECO:0007669"/>
    <property type="project" value="UniProtKB-KW"/>
</dbReference>
<dbReference type="FunFam" id="2.130.10.10:FF:000063">
    <property type="entry name" value="SEH1 like nucleoporin"/>
    <property type="match status" value="1"/>
</dbReference>
<dbReference type="Gene3D" id="2.130.10.10">
    <property type="entry name" value="YVTN repeat-like/Quinoprotein amine dehydrogenase"/>
    <property type="match status" value="1"/>
</dbReference>
<dbReference type="InterPro" id="IPR020472">
    <property type="entry name" value="G-protein_beta_WD-40_rep"/>
</dbReference>
<dbReference type="InterPro" id="IPR037363">
    <property type="entry name" value="Sec13/Seh1_fam"/>
</dbReference>
<dbReference type="InterPro" id="IPR015943">
    <property type="entry name" value="WD40/YVTN_repeat-like_dom_sf"/>
</dbReference>
<dbReference type="InterPro" id="IPR036322">
    <property type="entry name" value="WD40_repeat_dom_sf"/>
</dbReference>
<dbReference type="InterPro" id="IPR001680">
    <property type="entry name" value="WD40_rpt"/>
</dbReference>
<dbReference type="PANTHER" id="PTHR11024">
    <property type="entry name" value="NUCLEAR PORE COMPLEX PROTEIN SEC13 / SEH1 FAMILY MEMBER"/>
    <property type="match status" value="1"/>
</dbReference>
<dbReference type="PANTHER" id="PTHR11024:SF3">
    <property type="entry name" value="NUCLEOPORIN SEH1"/>
    <property type="match status" value="1"/>
</dbReference>
<dbReference type="Pfam" id="PF00400">
    <property type="entry name" value="WD40"/>
    <property type="match status" value="4"/>
</dbReference>
<dbReference type="PRINTS" id="PR00320">
    <property type="entry name" value="GPROTEINBRPT"/>
</dbReference>
<dbReference type="SMART" id="SM00320">
    <property type="entry name" value="WD40"/>
    <property type="match status" value="5"/>
</dbReference>
<dbReference type="SUPFAM" id="SSF50978">
    <property type="entry name" value="WD40 repeat-like"/>
    <property type="match status" value="1"/>
</dbReference>
<dbReference type="PROSITE" id="PS50082">
    <property type="entry name" value="WD_REPEATS_2"/>
    <property type="match status" value="2"/>
</dbReference>
<dbReference type="PROSITE" id="PS50294">
    <property type="entry name" value="WD_REPEATS_REGION"/>
    <property type="match status" value="2"/>
</dbReference>
<name>SEH1_PONAB</name>
<reference key="1">
    <citation type="submission" date="2004-11" db="EMBL/GenBank/DDBJ databases">
        <authorList>
            <consortium name="The German cDNA consortium"/>
        </authorList>
    </citation>
    <scope>NUCLEOTIDE SEQUENCE [LARGE SCALE MRNA]</scope>
    <source>
        <tissue>Kidney</tissue>
    </source>
</reference>